<organism>
    <name type="scientific">Azobacteroides pseudotrichonymphae genomovar. CFP2</name>
    <dbReference type="NCBI Taxonomy" id="511995"/>
    <lineage>
        <taxon>Bacteria</taxon>
        <taxon>Pseudomonadati</taxon>
        <taxon>Bacteroidota</taxon>
        <taxon>Bacteroidia</taxon>
        <taxon>Bacteroidales</taxon>
        <taxon>Candidatus Azobacteroides</taxon>
    </lineage>
</organism>
<evidence type="ECO:0000250" key="1"/>
<evidence type="ECO:0000255" key="2">
    <source>
        <dbReference type="HAMAP-Rule" id="MF_00403"/>
    </source>
</evidence>
<evidence type="ECO:0000256" key="3">
    <source>
        <dbReference type="SAM" id="MobiDB-lite"/>
    </source>
</evidence>
<evidence type="ECO:0000305" key="4"/>
<keyword id="KW-0488">Methylation</keyword>
<keyword id="KW-1185">Reference proteome</keyword>
<keyword id="KW-0687">Ribonucleoprotein</keyword>
<keyword id="KW-0689">Ribosomal protein</keyword>
<keyword id="KW-0694">RNA-binding</keyword>
<keyword id="KW-0699">rRNA-binding</keyword>
<keyword id="KW-0820">tRNA-binding</keyword>
<sequence>MPTIQQLVRKGRATFLKKGKAPALDSCPQKRGVCVRVYTTTPKKPNSAMRKVARVRLTNSKEVNVYIPGEGHNLQEHSIVLVRGGRVKDLPGVRYHIVRGALDTAGVSGRMQRRSKYGAKFPKTGTGKTKAVPTKNKK</sequence>
<comment type="function">
    <text evidence="2">With S4 and S5 plays an important role in translational accuracy.</text>
</comment>
<comment type="function">
    <text evidence="2">Interacts with and stabilizes bases of the 16S rRNA that are involved in tRNA selection in the A site and with the mRNA backbone. Located at the interface of the 30S and 50S subunits, it traverses the body of the 30S subunit contacting proteins on the other side and probably holding the rRNA structure together. The combined cluster of proteins S8, S12 and S17 appears to hold together the shoulder and platform of the 30S subunit.</text>
</comment>
<comment type="subunit">
    <text evidence="2">Part of the 30S ribosomal subunit. Contacts proteins S8 and S17. May interact with IF1 in the 30S initiation complex.</text>
</comment>
<comment type="similarity">
    <text evidence="2">Belongs to the universal ribosomal protein uS12 family.</text>
</comment>
<name>RS12_AZOPC</name>
<accession>B6YQ89</accession>
<dbReference type="EMBL" id="AP010656">
    <property type="protein sequence ID" value="BAG83361.1"/>
    <property type="molecule type" value="Genomic_DNA"/>
</dbReference>
<dbReference type="RefSeq" id="WP_012573122.1">
    <property type="nucleotide sequence ID" value="NC_011565.1"/>
</dbReference>
<dbReference type="SMR" id="B6YQ89"/>
<dbReference type="STRING" id="511995.CFPG_098"/>
<dbReference type="KEGG" id="aps:CFPG_098"/>
<dbReference type="eggNOG" id="COG0048">
    <property type="taxonomic scope" value="Bacteria"/>
</dbReference>
<dbReference type="HOGENOM" id="CLU_104295_1_2_10"/>
<dbReference type="OrthoDB" id="9802366at2"/>
<dbReference type="Proteomes" id="UP000000723">
    <property type="component" value="Chromosome"/>
</dbReference>
<dbReference type="GO" id="GO:0015935">
    <property type="term" value="C:small ribosomal subunit"/>
    <property type="evidence" value="ECO:0007669"/>
    <property type="project" value="InterPro"/>
</dbReference>
<dbReference type="GO" id="GO:0019843">
    <property type="term" value="F:rRNA binding"/>
    <property type="evidence" value="ECO:0007669"/>
    <property type="project" value="UniProtKB-UniRule"/>
</dbReference>
<dbReference type="GO" id="GO:0003735">
    <property type="term" value="F:structural constituent of ribosome"/>
    <property type="evidence" value="ECO:0007669"/>
    <property type="project" value="InterPro"/>
</dbReference>
<dbReference type="GO" id="GO:0000049">
    <property type="term" value="F:tRNA binding"/>
    <property type="evidence" value="ECO:0007669"/>
    <property type="project" value="UniProtKB-UniRule"/>
</dbReference>
<dbReference type="GO" id="GO:0006412">
    <property type="term" value="P:translation"/>
    <property type="evidence" value="ECO:0007669"/>
    <property type="project" value="UniProtKB-UniRule"/>
</dbReference>
<dbReference type="CDD" id="cd03368">
    <property type="entry name" value="Ribosomal_S12"/>
    <property type="match status" value="1"/>
</dbReference>
<dbReference type="FunFam" id="2.40.50.140:FF:000001">
    <property type="entry name" value="30S ribosomal protein S12"/>
    <property type="match status" value="1"/>
</dbReference>
<dbReference type="Gene3D" id="2.40.50.140">
    <property type="entry name" value="Nucleic acid-binding proteins"/>
    <property type="match status" value="1"/>
</dbReference>
<dbReference type="HAMAP" id="MF_00403_B">
    <property type="entry name" value="Ribosomal_uS12_B"/>
    <property type="match status" value="1"/>
</dbReference>
<dbReference type="InterPro" id="IPR012340">
    <property type="entry name" value="NA-bd_OB-fold"/>
</dbReference>
<dbReference type="InterPro" id="IPR006032">
    <property type="entry name" value="Ribosomal_uS12"/>
</dbReference>
<dbReference type="InterPro" id="IPR005679">
    <property type="entry name" value="Ribosomal_uS12_bac"/>
</dbReference>
<dbReference type="NCBIfam" id="TIGR00981">
    <property type="entry name" value="rpsL_bact"/>
    <property type="match status" value="1"/>
</dbReference>
<dbReference type="PANTHER" id="PTHR11652">
    <property type="entry name" value="30S RIBOSOMAL PROTEIN S12 FAMILY MEMBER"/>
    <property type="match status" value="1"/>
</dbReference>
<dbReference type="Pfam" id="PF00164">
    <property type="entry name" value="Ribosom_S12_S23"/>
    <property type="match status" value="1"/>
</dbReference>
<dbReference type="PIRSF" id="PIRSF002133">
    <property type="entry name" value="Ribosomal_S12/S23"/>
    <property type="match status" value="1"/>
</dbReference>
<dbReference type="PRINTS" id="PR01034">
    <property type="entry name" value="RIBOSOMALS12"/>
</dbReference>
<dbReference type="SUPFAM" id="SSF50249">
    <property type="entry name" value="Nucleic acid-binding proteins"/>
    <property type="match status" value="1"/>
</dbReference>
<dbReference type="PROSITE" id="PS00055">
    <property type="entry name" value="RIBOSOMAL_S12"/>
    <property type="match status" value="1"/>
</dbReference>
<gene>
    <name evidence="2" type="primary">rpsL</name>
    <name type="ordered locus">CFPG_098</name>
</gene>
<protein>
    <recommendedName>
        <fullName evidence="2">Small ribosomal subunit protein uS12</fullName>
    </recommendedName>
    <alternativeName>
        <fullName evidence="4">30S ribosomal protein S12</fullName>
    </alternativeName>
</protein>
<feature type="chain" id="PRO_1000194119" description="Small ribosomal subunit protein uS12">
    <location>
        <begin position="1"/>
        <end position="138"/>
    </location>
</feature>
<feature type="region of interest" description="Disordered" evidence="3">
    <location>
        <begin position="107"/>
        <end position="138"/>
    </location>
</feature>
<feature type="modified residue" description="3-methylthioaspartic acid" evidence="1">
    <location>
        <position position="89"/>
    </location>
</feature>
<reference key="1">
    <citation type="journal article" date="2008" name="Science">
        <title>Genome of an endosymbiont coupling N2 fixation to cellulolysis within RT protist cells in termite gut.</title>
        <authorList>
            <person name="Hongoh Y."/>
            <person name="Sharma V.K."/>
            <person name="Prakash T."/>
            <person name="Noda S."/>
            <person name="Toh H."/>
            <person name="Taylor T.D."/>
            <person name="Kudo T."/>
            <person name="Sakaki Y."/>
            <person name="Toyoda A."/>
            <person name="Hattori M."/>
            <person name="Ohkuma M."/>
        </authorList>
    </citation>
    <scope>NUCLEOTIDE SEQUENCE [LARGE SCALE GENOMIC DNA]</scope>
</reference>
<proteinExistence type="inferred from homology"/>